<name>MOEA_ECOLI</name>
<accession>P12281</accession>
<protein>
    <recommendedName>
        <fullName>Molybdopterin molybdenumtransferase</fullName>
        <shortName>MPT Mo-transferase</shortName>
        <ecNumber evidence="4">2.10.1.1</ecNumber>
    </recommendedName>
</protein>
<dbReference type="EC" id="2.10.1.1" evidence="4"/>
<dbReference type="EMBL" id="M21151">
    <property type="protein sequence ID" value="AAA23579.1"/>
    <property type="molecule type" value="Genomic_DNA"/>
</dbReference>
<dbReference type="EMBL" id="U00096">
    <property type="protein sequence ID" value="AAC73914.1"/>
    <property type="molecule type" value="Genomic_DNA"/>
</dbReference>
<dbReference type="EMBL" id="AP009048">
    <property type="protein sequence ID" value="BAA35515.1"/>
    <property type="molecule type" value="Genomic_DNA"/>
</dbReference>
<dbReference type="PIR" id="A32352">
    <property type="entry name" value="A32352"/>
</dbReference>
<dbReference type="RefSeq" id="NP_415348.1">
    <property type="nucleotide sequence ID" value="NC_000913.3"/>
</dbReference>
<dbReference type="RefSeq" id="WP_000397340.1">
    <property type="nucleotide sequence ID" value="NZ_SSZK01000002.1"/>
</dbReference>
<dbReference type="PDB" id="1FC5">
    <property type="method" value="X-ray"/>
    <property type="resolution" value="2.20 A"/>
    <property type="chains" value="A/B=1-411"/>
</dbReference>
<dbReference type="PDB" id="1G8L">
    <property type="method" value="X-ray"/>
    <property type="resolution" value="1.95 A"/>
    <property type="chains" value="A/B=1-411"/>
</dbReference>
<dbReference type="PDB" id="1G8R">
    <property type="method" value="X-ray"/>
    <property type="resolution" value="2.65 A"/>
    <property type="chains" value="A/B=1-411"/>
</dbReference>
<dbReference type="PDB" id="2NQK">
    <property type="method" value="X-ray"/>
    <property type="resolution" value="2.90 A"/>
    <property type="chains" value="A/B=1-411"/>
</dbReference>
<dbReference type="PDB" id="2NQM">
    <property type="method" value="X-ray"/>
    <property type="resolution" value="3.00 A"/>
    <property type="chains" value="A/B=1-411"/>
</dbReference>
<dbReference type="PDB" id="2NQN">
    <property type="method" value="X-ray"/>
    <property type="resolution" value="2.20 A"/>
    <property type="chains" value="A/B=1-411"/>
</dbReference>
<dbReference type="PDB" id="2NQQ">
    <property type="method" value="X-ray"/>
    <property type="resolution" value="2.40 A"/>
    <property type="chains" value="A/B/C/D=1-411"/>
</dbReference>
<dbReference type="PDB" id="2NQR">
    <property type="method" value="X-ray"/>
    <property type="resolution" value="2.20 A"/>
    <property type="chains" value="A/B=1-411"/>
</dbReference>
<dbReference type="PDB" id="2NQS">
    <property type="method" value="X-ray"/>
    <property type="resolution" value="2.50 A"/>
    <property type="chains" value="A/B=1-411"/>
</dbReference>
<dbReference type="PDB" id="2NQU">
    <property type="method" value="X-ray"/>
    <property type="resolution" value="2.70 A"/>
    <property type="chains" value="A/B=1-411"/>
</dbReference>
<dbReference type="PDB" id="2NQV">
    <property type="method" value="X-ray"/>
    <property type="resolution" value="2.82 A"/>
    <property type="chains" value="A/B=1-411"/>
</dbReference>
<dbReference type="PDB" id="2NRO">
    <property type="method" value="X-ray"/>
    <property type="resolution" value="2.50 A"/>
    <property type="chains" value="A/B=1-411"/>
</dbReference>
<dbReference type="PDB" id="2NRP">
    <property type="method" value="X-ray"/>
    <property type="resolution" value="3.00 A"/>
    <property type="chains" value="A/B=1-411"/>
</dbReference>
<dbReference type="PDB" id="2NRS">
    <property type="method" value="X-ray"/>
    <property type="resolution" value="2.80 A"/>
    <property type="chains" value="A/B=1-411"/>
</dbReference>
<dbReference type="PDBsum" id="1FC5"/>
<dbReference type="PDBsum" id="1G8L"/>
<dbReference type="PDBsum" id="1G8R"/>
<dbReference type="PDBsum" id="2NQK"/>
<dbReference type="PDBsum" id="2NQM"/>
<dbReference type="PDBsum" id="2NQN"/>
<dbReference type="PDBsum" id="2NQQ"/>
<dbReference type="PDBsum" id="2NQR"/>
<dbReference type="PDBsum" id="2NQS"/>
<dbReference type="PDBsum" id="2NQU"/>
<dbReference type="PDBsum" id="2NQV"/>
<dbReference type="PDBsum" id="2NRO"/>
<dbReference type="PDBsum" id="2NRP"/>
<dbReference type="PDBsum" id="2NRS"/>
<dbReference type="SMR" id="P12281"/>
<dbReference type="BioGRID" id="4259979">
    <property type="interactions" value="46"/>
</dbReference>
<dbReference type="BioGRID" id="849828">
    <property type="interactions" value="1"/>
</dbReference>
<dbReference type="DIP" id="DIP-10240N"/>
<dbReference type="FunCoup" id="P12281">
    <property type="interactions" value="802"/>
</dbReference>
<dbReference type="IntAct" id="P12281">
    <property type="interactions" value="8"/>
</dbReference>
<dbReference type="STRING" id="511145.b0827"/>
<dbReference type="jPOST" id="P12281"/>
<dbReference type="PaxDb" id="511145-b0827"/>
<dbReference type="EnsemblBacteria" id="AAC73914">
    <property type="protein sequence ID" value="AAC73914"/>
    <property type="gene ID" value="b0827"/>
</dbReference>
<dbReference type="GeneID" id="945454"/>
<dbReference type="KEGG" id="ecj:JW0811"/>
<dbReference type="KEGG" id="eco:b0827"/>
<dbReference type="KEGG" id="ecoc:C3026_05190"/>
<dbReference type="PATRIC" id="fig|1411691.4.peg.1451"/>
<dbReference type="EchoBASE" id="EB0151"/>
<dbReference type="eggNOG" id="COG0303">
    <property type="taxonomic scope" value="Bacteria"/>
</dbReference>
<dbReference type="HOGENOM" id="CLU_010186_7_0_6"/>
<dbReference type="InParanoid" id="P12281"/>
<dbReference type="OMA" id="TEYQRGI"/>
<dbReference type="OrthoDB" id="9804758at2"/>
<dbReference type="PhylomeDB" id="P12281"/>
<dbReference type="BioCyc" id="EcoCyc:EG10153-MONOMER"/>
<dbReference type="BioCyc" id="MetaCyc:EG10153-MONOMER"/>
<dbReference type="BRENDA" id="2.10.1.1">
    <property type="organism ID" value="2026"/>
</dbReference>
<dbReference type="UniPathway" id="UPA00344"/>
<dbReference type="EvolutionaryTrace" id="P12281"/>
<dbReference type="PRO" id="PR:P12281"/>
<dbReference type="Proteomes" id="UP000000625">
    <property type="component" value="Chromosome"/>
</dbReference>
<dbReference type="GO" id="GO:0005737">
    <property type="term" value="C:cytoplasm"/>
    <property type="evidence" value="ECO:0000318"/>
    <property type="project" value="GO_Central"/>
</dbReference>
<dbReference type="GO" id="GO:0005829">
    <property type="term" value="C:cytosol"/>
    <property type="evidence" value="ECO:0000314"/>
    <property type="project" value="EcoCyc"/>
</dbReference>
<dbReference type="GO" id="GO:0042802">
    <property type="term" value="F:identical protein binding"/>
    <property type="evidence" value="ECO:0000353"/>
    <property type="project" value="IntAct"/>
</dbReference>
<dbReference type="GO" id="GO:0046872">
    <property type="term" value="F:metal ion binding"/>
    <property type="evidence" value="ECO:0007669"/>
    <property type="project" value="UniProtKB-KW"/>
</dbReference>
<dbReference type="GO" id="GO:0061599">
    <property type="term" value="F:molybdopterin molybdotransferase activity"/>
    <property type="evidence" value="ECO:0000314"/>
    <property type="project" value="EcoCyc"/>
</dbReference>
<dbReference type="GO" id="GO:0042803">
    <property type="term" value="F:protein homodimerization activity"/>
    <property type="evidence" value="ECO:0000314"/>
    <property type="project" value="EcoCyc"/>
</dbReference>
<dbReference type="GO" id="GO:0006777">
    <property type="term" value="P:Mo-molybdopterin cofactor biosynthetic process"/>
    <property type="evidence" value="ECO:0000314"/>
    <property type="project" value="EcoCyc"/>
</dbReference>
<dbReference type="CDD" id="cd00887">
    <property type="entry name" value="MoeA"/>
    <property type="match status" value="1"/>
</dbReference>
<dbReference type="FunFam" id="2.170.190.11:FF:000003">
    <property type="entry name" value="Molybdopterin molybdenumtransferase"/>
    <property type="match status" value="1"/>
</dbReference>
<dbReference type="FunFam" id="2.40.340.10:FF:000003">
    <property type="entry name" value="Molybdopterin molybdenumtransferase"/>
    <property type="match status" value="1"/>
</dbReference>
<dbReference type="FunFam" id="3.40.980.10:FF:000004">
    <property type="entry name" value="Molybdopterin molybdenumtransferase"/>
    <property type="match status" value="1"/>
</dbReference>
<dbReference type="Gene3D" id="3.40.980.10">
    <property type="entry name" value="MoaB/Mog-like domain"/>
    <property type="match status" value="1"/>
</dbReference>
<dbReference type="Gene3D" id="2.40.340.10">
    <property type="entry name" value="MoeA, C-terminal, domain IV"/>
    <property type="match status" value="1"/>
</dbReference>
<dbReference type="Gene3D" id="3.90.105.10">
    <property type="entry name" value="Molybdopterin biosynthesis moea protein, domain 2"/>
    <property type="match status" value="1"/>
</dbReference>
<dbReference type="Gene3D" id="2.170.190.11">
    <property type="entry name" value="Molybdopterin biosynthesis moea protein, domain 3"/>
    <property type="match status" value="1"/>
</dbReference>
<dbReference type="InterPro" id="IPR036425">
    <property type="entry name" value="MoaB/Mog-like_dom_sf"/>
</dbReference>
<dbReference type="InterPro" id="IPR001453">
    <property type="entry name" value="MoaB/Mog_dom"/>
</dbReference>
<dbReference type="InterPro" id="IPR008284">
    <property type="entry name" value="MoCF_biosynth_CS"/>
</dbReference>
<dbReference type="InterPro" id="IPR038987">
    <property type="entry name" value="MoeA-like"/>
</dbReference>
<dbReference type="InterPro" id="IPR005111">
    <property type="entry name" value="MoeA_C_domain_IV"/>
</dbReference>
<dbReference type="InterPro" id="IPR036688">
    <property type="entry name" value="MoeA_C_domain_IV_sf"/>
</dbReference>
<dbReference type="InterPro" id="IPR005110">
    <property type="entry name" value="MoeA_linker/N"/>
</dbReference>
<dbReference type="InterPro" id="IPR036135">
    <property type="entry name" value="MoeA_linker/N_sf"/>
</dbReference>
<dbReference type="NCBIfam" id="NF045515">
    <property type="entry name" value="Glp_gephyrin"/>
    <property type="match status" value="1"/>
</dbReference>
<dbReference type="NCBIfam" id="TIGR00177">
    <property type="entry name" value="molyb_syn"/>
    <property type="match status" value="1"/>
</dbReference>
<dbReference type="NCBIfam" id="NF007960">
    <property type="entry name" value="PRK10680.1"/>
    <property type="match status" value="1"/>
</dbReference>
<dbReference type="PANTHER" id="PTHR10192:SF5">
    <property type="entry name" value="GEPHYRIN"/>
    <property type="match status" value="1"/>
</dbReference>
<dbReference type="PANTHER" id="PTHR10192">
    <property type="entry name" value="MOLYBDOPTERIN BIOSYNTHESIS PROTEIN"/>
    <property type="match status" value="1"/>
</dbReference>
<dbReference type="Pfam" id="PF00994">
    <property type="entry name" value="MoCF_biosynth"/>
    <property type="match status" value="1"/>
</dbReference>
<dbReference type="Pfam" id="PF03454">
    <property type="entry name" value="MoeA_C"/>
    <property type="match status" value="1"/>
</dbReference>
<dbReference type="Pfam" id="PF03453">
    <property type="entry name" value="MoeA_N"/>
    <property type="match status" value="1"/>
</dbReference>
<dbReference type="SMART" id="SM00852">
    <property type="entry name" value="MoCF_biosynth"/>
    <property type="match status" value="1"/>
</dbReference>
<dbReference type="SUPFAM" id="SSF63867">
    <property type="entry name" value="MoeA C-terminal domain-like"/>
    <property type="match status" value="1"/>
</dbReference>
<dbReference type="SUPFAM" id="SSF63882">
    <property type="entry name" value="MoeA N-terminal region -like"/>
    <property type="match status" value="1"/>
</dbReference>
<dbReference type="SUPFAM" id="SSF53218">
    <property type="entry name" value="Molybdenum cofactor biosynthesis proteins"/>
    <property type="match status" value="1"/>
</dbReference>
<dbReference type="PROSITE" id="PS01079">
    <property type="entry name" value="MOCF_BIOSYNTHESIS_2"/>
    <property type="match status" value="1"/>
</dbReference>
<evidence type="ECO:0000269" key="1">
    <source>
    </source>
</evidence>
<evidence type="ECO:0000269" key="2">
    <source>
    </source>
</evidence>
<evidence type="ECO:0000269" key="3">
    <source>
    </source>
</evidence>
<evidence type="ECO:0000269" key="4">
    <source>
    </source>
</evidence>
<evidence type="ECO:0000305" key="5"/>
<evidence type="ECO:0007829" key="6">
    <source>
        <dbReference type="PDB" id="1FC5"/>
    </source>
</evidence>
<evidence type="ECO:0007829" key="7">
    <source>
        <dbReference type="PDB" id="1G8L"/>
    </source>
</evidence>
<evidence type="ECO:0007829" key="8">
    <source>
        <dbReference type="PDB" id="2NQM"/>
    </source>
</evidence>
<evidence type="ECO:0007829" key="9">
    <source>
        <dbReference type="PDB" id="2NQV"/>
    </source>
</evidence>
<evidence type="ECO:0007829" key="10">
    <source>
        <dbReference type="PDB" id="2NRP"/>
    </source>
</evidence>
<keyword id="KW-0002">3D-structure</keyword>
<keyword id="KW-0460">Magnesium</keyword>
<keyword id="KW-0479">Metal-binding</keyword>
<keyword id="KW-0500">Molybdenum</keyword>
<keyword id="KW-0501">Molybdenum cofactor biosynthesis</keyword>
<keyword id="KW-1185">Reference proteome</keyword>
<keyword id="KW-0808">Transferase</keyword>
<organism>
    <name type="scientific">Escherichia coli (strain K12)</name>
    <dbReference type="NCBI Taxonomy" id="83333"/>
    <lineage>
        <taxon>Bacteria</taxon>
        <taxon>Pseudomonadati</taxon>
        <taxon>Pseudomonadota</taxon>
        <taxon>Gammaproteobacteria</taxon>
        <taxon>Enterobacterales</taxon>
        <taxon>Enterobacteriaceae</taxon>
        <taxon>Escherichia</taxon>
    </lineage>
</organism>
<proteinExistence type="evidence at protein level"/>
<feature type="chain" id="PRO_0000170989" description="Molybdopterin molybdenumtransferase">
    <location>
        <begin position="1"/>
        <end position="411"/>
    </location>
</feature>
<feature type="helix" evidence="7">
    <location>
        <begin position="10"/>
        <end position="20"/>
    </location>
</feature>
<feature type="strand" evidence="7">
    <location>
        <begin position="27"/>
        <end position="31"/>
    </location>
</feature>
<feature type="helix" evidence="7">
    <location>
        <begin position="32"/>
        <end position="34"/>
    </location>
</feature>
<feature type="strand" evidence="7">
    <location>
        <begin position="39"/>
        <end position="42"/>
    </location>
</feature>
<feature type="strand" evidence="7">
    <location>
        <begin position="50"/>
        <end position="53"/>
    </location>
</feature>
<feature type="strand" evidence="7">
    <location>
        <begin position="55"/>
        <end position="63"/>
    </location>
</feature>
<feature type="helix" evidence="7">
    <location>
        <begin position="65"/>
        <end position="70"/>
    </location>
</feature>
<feature type="strand" evidence="7">
    <location>
        <begin position="76"/>
        <end position="81"/>
    </location>
</feature>
<feature type="strand" evidence="6">
    <location>
        <begin position="82"/>
        <end position="84"/>
    </location>
</feature>
<feature type="strand" evidence="7">
    <location>
        <begin position="95"/>
        <end position="98"/>
    </location>
</feature>
<feature type="strand" evidence="7">
    <location>
        <begin position="110"/>
        <end position="113"/>
    </location>
</feature>
<feature type="helix" evidence="7">
    <location>
        <begin position="114"/>
        <end position="116"/>
    </location>
</feature>
<feature type="strand" evidence="7">
    <location>
        <begin position="117"/>
        <end position="120"/>
    </location>
</feature>
<feature type="strand" evidence="7">
    <location>
        <begin position="123"/>
        <end position="126"/>
    </location>
</feature>
<feature type="turn" evidence="7">
    <location>
        <begin position="132"/>
        <end position="135"/>
    </location>
</feature>
<feature type="strand" evidence="7">
    <location>
        <begin position="141"/>
        <end position="143"/>
    </location>
</feature>
<feature type="strand" evidence="7">
    <location>
        <begin position="147"/>
        <end position="150"/>
    </location>
</feature>
<feature type="turn" evidence="7">
    <location>
        <begin position="158"/>
        <end position="160"/>
    </location>
</feature>
<feature type="helix" evidence="7">
    <location>
        <begin position="161"/>
        <end position="166"/>
    </location>
</feature>
<feature type="strand" evidence="7">
    <location>
        <begin position="171"/>
        <end position="175"/>
    </location>
</feature>
<feature type="strand" evidence="7">
    <location>
        <begin position="179"/>
        <end position="185"/>
    </location>
</feature>
<feature type="strand" evidence="10">
    <location>
        <begin position="187"/>
        <end position="190"/>
    </location>
</feature>
<feature type="strand" evidence="9">
    <location>
        <begin position="192"/>
        <end position="194"/>
    </location>
</feature>
<feature type="helix" evidence="7">
    <location>
        <begin position="205"/>
        <end position="215"/>
    </location>
</feature>
<feature type="strand" evidence="7">
    <location>
        <begin position="219"/>
        <end position="226"/>
    </location>
</feature>
<feature type="helix" evidence="7">
    <location>
        <begin position="230"/>
        <end position="243"/>
    </location>
</feature>
<feature type="strand" evidence="7">
    <location>
        <begin position="245"/>
        <end position="249"/>
    </location>
</feature>
<feature type="strand" evidence="7">
    <location>
        <begin position="251"/>
        <end position="253"/>
    </location>
</feature>
<feature type="strand" evidence="7">
    <location>
        <begin position="255"/>
        <end position="257"/>
    </location>
</feature>
<feature type="helix" evidence="7">
    <location>
        <begin position="260"/>
        <end position="268"/>
    </location>
</feature>
<feature type="strand" evidence="7">
    <location>
        <begin position="269"/>
        <end position="280"/>
    </location>
</feature>
<feature type="strand" evidence="7">
    <location>
        <begin position="283"/>
        <end position="288"/>
    </location>
</feature>
<feature type="strand" evidence="7">
    <location>
        <begin position="290"/>
        <end position="296"/>
    </location>
</feature>
<feature type="helix" evidence="7">
    <location>
        <begin position="301"/>
        <end position="310"/>
    </location>
</feature>
<feature type="helix" evidence="7">
    <location>
        <begin position="312"/>
        <end position="320"/>
    </location>
</feature>
<feature type="strand" evidence="8">
    <location>
        <begin position="326"/>
        <end position="328"/>
    </location>
</feature>
<feature type="strand" evidence="7">
    <location>
        <begin position="331"/>
        <end position="337"/>
    </location>
</feature>
<feature type="strand" evidence="7">
    <location>
        <begin position="345"/>
        <end position="355"/>
    </location>
</feature>
<feature type="strand" evidence="8">
    <location>
        <begin position="357"/>
        <end position="359"/>
    </location>
</feature>
<feature type="strand" evidence="7">
    <location>
        <begin position="361"/>
        <end position="365"/>
    </location>
</feature>
<feature type="helix" evidence="7">
    <location>
        <begin position="376"/>
        <end position="379"/>
    </location>
</feature>
<feature type="strand" evidence="7">
    <location>
        <begin position="381"/>
        <end position="386"/>
    </location>
</feature>
<feature type="strand" evidence="7">
    <location>
        <begin position="398"/>
        <end position="403"/>
    </location>
</feature>
<feature type="helix" evidence="7">
    <location>
        <begin position="406"/>
        <end position="408"/>
    </location>
</feature>
<comment type="function">
    <text evidence="4">Catalyzes the insertion of molybdate into adenylated molybdopterin with the concomitant release of AMP.</text>
</comment>
<comment type="catalytic activity">
    <reaction evidence="4">
        <text>adenylyl-molybdopterin + molybdate = Mo-molybdopterin + AMP + H(+)</text>
        <dbReference type="Rhea" id="RHEA:35047"/>
        <dbReference type="ChEBI" id="CHEBI:15378"/>
        <dbReference type="ChEBI" id="CHEBI:36264"/>
        <dbReference type="ChEBI" id="CHEBI:62727"/>
        <dbReference type="ChEBI" id="CHEBI:71302"/>
        <dbReference type="ChEBI" id="CHEBI:456215"/>
        <dbReference type="EC" id="2.10.1.1"/>
    </reaction>
</comment>
<comment type="cofactor">
    <cofactor evidence="1">
        <name>Mg(2+)</name>
        <dbReference type="ChEBI" id="CHEBI:18420"/>
    </cofactor>
    <text evidence="1">Binds 1 Mg(2+) ion per subunit.</text>
</comment>
<comment type="pathway">
    <text>Cofactor biosynthesis; molybdopterin biosynthesis.</text>
</comment>
<comment type="subunit">
    <text evidence="1 2 3">Homodimer. Interacts with MobA, MogA and MobB in vivo.</text>
</comment>
<comment type="interaction">
    <interactant intactId="EBI-554393">
        <id>P12281</id>
    </interactant>
    <interactant intactId="EBI-1133881">
        <id>P32173</id>
        <label>mobA</label>
    </interactant>
    <organismsDiffer>false</organismsDiffer>
    <experiments>3</experiments>
</comment>
<comment type="interaction">
    <interactant intactId="EBI-554393">
        <id>P12281</id>
    </interactant>
    <interactant intactId="EBI-554393">
        <id>P12281</id>
        <label>moeA</label>
    </interactant>
    <organismsDiffer>false</organismsDiffer>
    <experiments>5</experiments>
</comment>
<comment type="interaction">
    <interactant intactId="EBI-554393">
        <id>P12281</id>
    </interactant>
    <interactant intactId="EBI-554405">
        <id>P0A796</id>
        <label>pfkA</label>
    </interactant>
    <organismsDiffer>false</organismsDiffer>
    <experiments>2</experiments>
</comment>
<comment type="similarity">
    <text evidence="5">Belongs to the MoeA family.</text>
</comment>
<gene>
    <name type="primary">moeA</name>
    <name type="synonym">bisB</name>
    <name type="synonym">chlE</name>
    <name type="synonym">narE</name>
    <name type="ordered locus">b0827</name>
    <name type="ordered locus">JW0811</name>
</gene>
<reference key="1">
    <citation type="journal article" date="1988" name="J. Bacteriol.">
        <title>Cloning and sequencing of the Escherichia coli chlEN operon involved in molybdopterin biosynthesis.</title>
        <authorList>
            <person name="Nohno T."/>
            <person name="Kasai Y."/>
            <person name="Saito T."/>
        </authorList>
    </citation>
    <scope>NUCLEOTIDE SEQUENCE [GENOMIC DNA]</scope>
</reference>
<reference key="2">
    <citation type="journal article" date="1996" name="DNA Res.">
        <title>A 718-kb DNA sequence of the Escherichia coli K-12 genome corresponding to the 12.7-28.0 min region on the linkage map.</title>
        <authorList>
            <person name="Oshima T."/>
            <person name="Aiba H."/>
            <person name="Baba T."/>
            <person name="Fujita K."/>
            <person name="Hayashi K."/>
            <person name="Honjo A."/>
            <person name="Ikemoto K."/>
            <person name="Inada T."/>
            <person name="Itoh T."/>
            <person name="Kajihara M."/>
            <person name="Kanai K."/>
            <person name="Kashimoto K."/>
            <person name="Kimura S."/>
            <person name="Kitagawa M."/>
            <person name="Makino K."/>
            <person name="Masuda S."/>
            <person name="Miki T."/>
            <person name="Mizobuchi K."/>
            <person name="Mori H."/>
            <person name="Motomura K."/>
            <person name="Nakamura Y."/>
            <person name="Nashimoto H."/>
            <person name="Nishio Y."/>
            <person name="Saito N."/>
            <person name="Sampei G."/>
            <person name="Seki Y."/>
            <person name="Tagami H."/>
            <person name="Takemoto K."/>
            <person name="Wada C."/>
            <person name="Yamamoto Y."/>
            <person name="Yano M."/>
            <person name="Horiuchi T."/>
        </authorList>
    </citation>
    <scope>NUCLEOTIDE SEQUENCE [LARGE SCALE GENOMIC DNA]</scope>
    <source>
        <strain>K12 / W3110 / ATCC 27325 / DSM 5911</strain>
    </source>
</reference>
<reference key="3">
    <citation type="journal article" date="1997" name="Science">
        <title>The complete genome sequence of Escherichia coli K-12.</title>
        <authorList>
            <person name="Blattner F.R."/>
            <person name="Plunkett G. III"/>
            <person name="Bloch C.A."/>
            <person name="Perna N.T."/>
            <person name="Burland V."/>
            <person name="Riley M."/>
            <person name="Collado-Vides J."/>
            <person name="Glasner J.D."/>
            <person name="Rode C.K."/>
            <person name="Mayhew G.F."/>
            <person name="Gregor J."/>
            <person name="Davis N.W."/>
            <person name="Kirkpatrick H.A."/>
            <person name="Goeden M.A."/>
            <person name="Rose D.J."/>
            <person name="Mau B."/>
            <person name="Shao Y."/>
        </authorList>
    </citation>
    <scope>NUCLEOTIDE SEQUENCE [LARGE SCALE GENOMIC DNA]</scope>
    <source>
        <strain>K12 / MG1655 / ATCC 47076</strain>
    </source>
</reference>
<reference key="4">
    <citation type="journal article" date="2006" name="Mol. Syst. Biol.">
        <title>Highly accurate genome sequences of Escherichia coli K-12 strains MG1655 and W3110.</title>
        <authorList>
            <person name="Hayashi K."/>
            <person name="Morooka N."/>
            <person name="Yamamoto Y."/>
            <person name="Fujita K."/>
            <person name="Isono K."/>
            <person name="Choi S."/>
            <person name="Ohtsubo E."/>
            <person name="Baba T."/>
            <person name="Wanner B.L."/>
            <person name="Mori H."/>
            <person name="Horiuchi T."/>
        </authorList>
    </citation>
    <scope>NUCLEOTIDE SEQUENCE [LARGE SCALE GENOMIC DNA]</scope>
    <source>
        <strain>K12 / W3110 / ATCC 27325 / DSM 5911</strain>
    </source>
</reference>
<reference key="5">
    <citation type="journal article" date="1998" name="J. Bacteriol.">
        <title>Physiological and genetic analyses leading to identification of a biochemical role for the moeA (molybdate metabolism) gene product in Escherichia coli.</title>
        <authorList>
            <person name="Hasona A."/>
            <person name="Ray R.M."/>
            <person name="Shanmugam K.T."/>
        </authorList>
    </citation>
    <scope>CHARACTERIZATION</scope>
</reference>
<reference key="6">
    <citation type="journal article" date="2002" name="J. Biol. Chem.">
        <title>In vivo interactions between gene products involved in the final stages of molybdenum cofactor biosynthesis in Escherichia coli.</title>
        <authorList>
            <person name="Magalon A."/>
            <person name="Frixon C."/>
            <person name="Pommier J."/>
            <person name="Giordano G."/>
            <person name="Blasco F."/>
        </authorList>
    </citation>
    <scope>INTERACTION WITH MOBA; MOGA AND MOBB</scope>
    <source>
        <strain>K12 / MC4100 / ATCC 35695 / DSM 6574</strain>
    </source>
</reference>
<reference key="7">
    <citation type="journal article" date="2005" name="J. Biol. Chem.">
        <title>In vitro molybdenum ligation to molybdopterin using purified components.</title>
        <authorList>
            <person name="Nichols J.D."/>
            <person name="Rajagopalan K.V."/>
        </authorList>
    </citation>
    <scope>FUNCTION</scope>
    <scope>CATALYTIC ACTIVITY</scope>
</reference>
<reference key="8">
    <citation type="journal article" date="2001" name="J. Mol. Biol.">
        <title>The crystal structure of Escherichia coli MoeA, a protein from the molybdopterin synthesis pathway.</title>
        <authorList>
            <person name="Schrag J.D."/>
            <person name="Huang W."/>
            <person name="Sivaraman J."/>
            <person name="Smith C."/>
            <person name="Plamondon J."/>
            <person name="Larocque R."/>
            <person name="Matte A."/>
            <person name="Cygler M."/>
        </authorList>
    </citation>
    <scope>X-RAY CRYSTALLOGRAPHY (2.2 ANGSTROMS) IN COMPLEX WITH MAGNESIUM ION</scope>
    <scope>SUBUNIT</scope>
    <scope>COFACTOR</scope>
</reference>
<reference key="9">
    <citation type="journal article" date="2001" name="Structure">
        <title>The crystal structure of Escherichia coli MoeA and its relationship to the multifunctional protein gephyrin.</title>
        <authorList>
            <person name="Xiang S."/>
            <person name="Nichols J."/>
            <person name="Rajagopalan K.V."/>
            <person name="Schindelin H."/>
        </authorList>
    </citation>
    <scope>X-RAY CRYSTALLOGRAPHY (1.95 ANGSTROMS)</scope>
    <scope>SUBUNIT</scope>
</reference>
<sequence length="411" mass="44067">MEFTTGLMSLDTALNEMLSRVTPLTAQETLPLVQCFGRILASDVVSPLDVPGFDNSAMDGYAVRLADIASGQPLPVAGKSFAGQPYHGEWPAGTCIRIMTGAPVPEGCEAVVMQEQTEQMDNGVRFTAEVRSGQNIRRRGEDISAGAVVFPAGTRLTTAELPVIASLGIAEVPVIRKVRVALFSTGDELQLPGQPLGDGQIYDTNRLAVHLMLEQLGCEVINLGIIRDDPHALRAAFIEADSQADVVISSGGVSVGEADYTKTILEELGEIAFWKLAIKPGKPFAFGKLSNSWFCGLPGNPVSATLTFYQLVQPLLAKLSGNTASGLPARQRVRTASRLKKTPGRLDFQRGVLQRNADGELEVTTTGHQGSHIFSSFSLGNCFIVLERDRGNVEVGEWVEVEPFNALFGGL</sequence>